<feature type="chain" id="PRO_0000276457" description="Large ribosomal subunit protein bL27c">
    <location>
        <begin position="1"/>
        <end position="84"/>
    </location>
</feature>
<feature type="region of interest" description="Disordered" evidence="2">
    <location>
        <begin position="1"/>
        <end position="23"/>
    </location>
</feature>
<comment type="subcellular location">
    <subcellularLocation>
        <location>Plastid</location>
        <location>Chloroplast</location>
    </subcellularLocation>
</comment>
<comment type="similarity">
    <text evidence="1">Belongs to the bacterial ribosomal protein bL27 family.</text>
</comment>
<geneLocation type="chloroplast"/>
<organism>
    <name type="scientific">Thalassiosira pseudonana</name>
    <name type="common">Marine diatom</name>
    <name type="synonym">Cyclotella nana</name>
    <dbReference type="NCBI Taxonomy" id="35128"/>
    <lineage>
        <taxon>Eukaryota</taxon>
        <taxon>Sar</taxon>
        <taxon>Stramenopiles</taxon>
        <taxon>Ochrophyta</taxon>
        <taxon>Bacillariophyta</taxon>
        <taxon>Coscinodiscophyceae</taxon>
        <taxon>Thalassiosirophycidae</taxon>
        <taxon>Thalassiosirales</taxon>
        <taxon>Thalassiosiraceae</taxon>
        <taxon>Thalassiosira</taxon>
    </lineage>
</organism>
<sequence>MAHKKGAGSTKNGRDSNAKRLGVKRFGGETVKAGSILIRQRGMKFKPGVNVGYGKDFTLFALIDGTVKFDYKDAQHKRVNIITQ</sequence>
<gene>
    <name evidence="1" type="primary">rpl27</name>
</gene>
<accession>A0T0V7</accession>
<keyword id="KW-0150">Chloroplast</keyword>
<keyword id="KW-0934">Plastid</keyword>
<keyword id="KW-0687">Ribonucleoprotein</keyword>
<keyword id="KW-0689">Ribosomal protein</keyword>
<protein>
    <recommendedName>
        <fullName evidence="1">Large ribosomal subunit protein bL27c</fullName>
    </recommendedName>
    <alternativeName>
        <fullName evidence="3">50S ribosomal protein L27, chloroplastic</fullName>
    </alternativeName>
</protein>
<name>RK27_THAPS</name>
<dbReference type="EMBL" id="EF067921">
    <property type="protein sequence ID" value="ABK20792.1"/>
    <property type="molecule type" value="Genomic_DNA"/>
</dbReference>
<dbReference type="EMBL" id="EF067921">
    <property type="protein sequence ID" value="ABK20848.1"/>
    <property type="molecule type" value="Genomic_DNA"/>
</dbReference>
<dbReference type="RefSeq" id="YP_874569.1">
    <property type="nucleotide sequence ID" value="NC_008589.1"/>
</dbReference>
<dbReference type="RefSeq" id="YP_874625.1">
    <property type="nucleotide sequence ID" value="NC_008589.1"/>
</dbReference>
<dbReference type="SMR" id="A0T0V7"/>
<dbReference type="STRING" id="35128.A0T0V7"/>
<dbReference type="GeneID" id="4524827"/>
<dbReference type="GeneID" id="4524886"/>
<dbReference type="InParanoid" id="A0T0V7"/>
<dbReference type="GO" id="GO:0009507">
    <property type="term" value="C:chloroplast"/>
    <property type="evidence" value="ECO:0007669"/>
    <property type="project" value="UniProtKB-SubCell"/>
</dbReference>
<dbReference type="GO" id="GO:0005762">
    <property type="term" value="C:mitochondrial large ribosomal subunit"/>
    <property type="evidence" value="ECO:0000318"/>
    <property type="project" value="GO_Central"/>
</dbReference>
<dbReference type="GO" id="GO:0003735">
    <property type="term" value="F:structural constituent of ribosome"/>
    <property type="evidence" value="ECO:0000318"/>
    <property type="project" value="GO_Central"/>
</dbReference>
<dbReference type="GO" id="GO:0006412">
    <property type="term" value="P:translation"/>
    <property type="evidence" value="ECO:0007669"/>
    <property type="project" value="UniProtKB-UniRule"/>
</dbReference>
<dbReference type="FunFam" id="2.40.50.100:FF:000026">
    <property type="entry name" value="50S ribosomal protein L27"/>
    <property type="match status" value="1"/>
</dbReference>
<dbReference type="Gene3D" id="2.40.50.100">
    <property type="match status" value="1"/>
</dbReference>
<dbReference type="HAMAP" id="MF_00539">
    <property type="entry name" value="Ribosomal_bL27"/>
    <property type="match status" value="1"/>
</dbReference>
<dbReference type="InterPro" id="IPR001684">
    <property type="entry name" value="Ribosomal_bL27"/>
</dbReference>
<dbReference type="InterPro" id="IPR018261">
    <property type="entry name" value="Ribosomal_bL27_CS"/>
</dbReference>
<dbReference type="NCBIfam" id="TIGR00062">
    <property type="entry name" value="L27"/>
    <property type="match status" value="1"/>
</dbReference>
<dbReference type="PANTHER" id="PTHR15893:SF0">
    <property type="entry name" value="LARGE RIBOSOMAL SUBUNIT PROTEIN BL27M"/>
    <property type="match status" value="1"/>
</dbReference>
<dbReference type="PANTHER" id="PTHR15893">
    <property type="entry name" value="RIBOSOMAL PROTEIN L27"/>
    <property type="match status" value="1"/>
</dbReference>
<dbReference type="Pfam" id="PF01016">
    <property type="entry name" value="Ribosomal_L27"/>
    <property type="match status" value="1"/>
</dbReference>
<dbReference type="PRINTS" id="PR00063">
    <property type="entry name" value="RIBOSOMALL27"/>
</dbReference>
<dbReference type="SUPFAM" id="SSF110324">
    <property type="entry name" value="Ribosomal L27 protein-like"/>
    <property type="match status" value="1"/>
</dbReference>
<dbReference type="PROSITE" id="PS00831">
    <property type="entry name" value="RIBOSOMAL_L27"/>
    <property type="match status" value="1"/>
</dbReference>
<proteinExistence type="inferred from homology"/>
<reference key="1">
    <citation type="journal article" date="2007" name="Mol. Genet. Genomics">
        <title>Chloroplast genomes of the diatoms Phaeodactylum tricornutum and Thalassiosira pseudonana: comparison with other plastid genomes of the red lineage.</title>
        <authorList>
            <person name="Oudot-Le Secq M.-P."/>
            <person name="Grimwood J."/>
            <person name="Shapiro H."/>
            <person name="Armbrust E.V."/>
            <person name="Bowler C."/>
            <person name="Green B.R."/>
        </authorList>
    </citation>
    <scope>NUCLEOTIDE SEQUENCE [LARGE SCALE GENOMIC DNA]</scope>
    <source>
        <strain>CCMP1335 / NEPCC58 / CCAP 1085/12</strain>
    </source>
</reference>
<evidence type="ECO:0000255" key="1">
    <source>
        <dbReference type="HAMAP-Rule" id="MF_00539"/>
    </source>
</evidence>
<evidence type="ECO:0000256" key="2">
    <source>
        <dbReference type="SAM" id="MobiDB-lite"/>
    </source>
</evidence>
<evidence type="ECO:0000305" key="3"/>